<gene>
    <name evidence="1" type="primary">rpsF</name>
    <name type="ordered locus">JTY_0054</name>
</gene>
<name>RS6_MYCBT</name>
<keyword id="KW-0687">Ribonucleoprotein</keyword>
<keyword id="KW-0689">Ribosomal protein</keyword>
<keyword id="KW-0694">RNA-binding</keyword>
<keyword id="KW-0699">rRNA-binding</keyword>
<organism>
    <name type="scientific">Mycobacterium bovis (strain BCG / Tokyo 172 / ATCC 35737 / TMC 1019)</name>
    <dbReference type="NCBI Taxonomy" id="561275"/>
    <lineage>
        <taxon>Bacteria</taxon>
        <taxon>Bacillati</taxon>
        <taxon>Actinomycetota</taxon>
        <taxon>Actinomycetes</taxon>
        <taxon>Mycobacteriales</taxon>
        <taxon>Mycobacteriaceae</taxon>
        <taxon>Mycobacterium</taxon>
        <taxon>Mycobacterium tuberculosis complex</taxon>
    </lineage>
</organism>
<reference key="1">
    <citation type="journal article" date="2009" name="Vaccine">
        <title>Whole genome sequence analysis of Mycobacterium bovis bacillus Calmette-Guerin (BCG) Tokyo 172: a comparative study of BCG vaccine substrains.</title>
        <authorList>
            <person name="Seki M."/>
            <person name="Honda I."/>
            <person name="Fujita I."/>
            <person name="Yano I."/>
            <person name="Yamamoto S."/>
            <person name="Koyama A."/>
        </authorList>
    </citation>
    <scope>NUCLEOTIDE SEQUENCE [LARGE SCALE GENOMIC DNA]</scope>
    <source>
        <strain>BCG / Tokyo 172 / ATCC 35737 / TMC 1019</strain>
    </source>
</reference>
<accession>C1AJ76</accession>
<proteinExistence type="inferred from homology"/>
<evidence type="ECO:0000255" key="1">
    <source>
        <dbReference type="HAMAP-Rule" id="MF_00360"/>
    </source>
</evidence>
<evidence type="ECO:0000305" key="2"/>
<feature type="chain" id="PRO_1000133537" description="Small ribosomal subunit protein bS6">
    <location>
        <begin position="1"/>
        <end position="96"/>
    </location>
</feature>
<protein>
    <recommendedName>
        <fullName evidence="1">Small ribosomal subunit protein bS6</fullName>
    </recommendedName>
    <alternativeName>
        <fullName evidence="2">30S ribosomal protein S6</fullName>
    </alternativeName>
</protein>
<dbReference type="EMBL" id="AP010918">
    <property type="protein sequence ID" value="BAH24355.1"/>
    <property type="molecule type" value="Genomic_DNA"/>
</dbReference>
<dbReference type="RefSeq" id="WP_003400520.1">
    <property type="nucleotide sequence ID" value="NZ_CP014566.1"/>
</dbReference>
<dbReference type="SMR" id="C1AJ76"/>
<dbReference type="GeneID" id="45424012"/>
<dbReference type="KEGG" id="mbt:JTY_0054"/>
<dbReference type="HOGENOM" id="CLU_113441_5_3_11"/>
<dbReference type="GO" id="GO:0005737">
    <property type="term" value="C:cytoplasm"/>
    <property type="evidence" value="ECO:0007669"/>
    <property type="project" value="UniProtKB-ARBA"/>
</dbReference>
<dbReference type="GO" id="GO:1990904">
    <property type="term" value="C:ribonucleoprotein complex"/>
    <property type="evidence" value="ECO:0007669"/>
    <property type="project" value="UniProtKB-KW"/>
</dbReference>
<dbReference type="GO" id="GO:0005840">
    <property type="term" value="C:ribosome"/>
    <property type="evidence" value="ECO:0007669"/>
    <property type="project" value="UniProtKB-KW"/>
</dbReference>
<dbReference type="GO" id="GO:0070181">
    <property type="term" value="F:small ribosomal subunit rRNA binding"/>
    <property type="evidence" value="ECO:0007669"/>
    <property type="project" value="TreeGrafter"/>
</dbReference>
<dbReference type="GO" id="GO:0003735">
    <property type="term" value="F:structural constituent of ribosome"/>
    <property type="evidence" value="ECO:0007669"/>
    <property type="project" value="InterPro"/>
</dbReference>
<dbReference type="GO" id="GO:0006412">
    <property type="term" value="P:translation"/>
    <property type="evidence" value="ECO:0007669"/>
    <property type="project" value="UniProtKB-UniRule"/>
</dbReference>
<dbReference type="CDD" id="cd00473">
    <property type="entry name" value="bS6"/>
    <property type="match status" value="1"/>
</dbReference>
<dbReference type="FunFam" id="3.30.70.60:FF:000002">
    <property type="entry name" value="30S ribosomal protein S6"/>
    <property type="match status" value="1"/>
</dbReference>
<dbReference type="Gene3D" id="3.30.70.60">
    <property type="match status" value="1"/>
</dbReference>
<dbReference type="HAMAP" id="MF_00360">
    <property type="entry name" value="Ribosomal_bS6"/>
    <property type="match status" value="1"/>
</dbReference>
<dbReference type="InterPro" id="IPR000529">
    <property type="entry name" value="Ribosomal_bS6"/>
</dbReference>
<dbReference type="InterPro" id="IPR020815">
    <property type="entry name" value="Ribosomal_bS6_CS"/>
</dbReference>
<dbReference type="InterPro" id="IPR035980">
    <property type="entry name" value="Ribosomal_bS6_sf"/>
</dbReference>
<dbReference type="InterPro" id="IPR020814">
    <property type="entry name" value="Ribosomal_S6_plastid/chlpt"/>
</dbReference>
<dbReference type="InterPro" id="IPR014717">
    <property type="entry name" value="Transl_elong_EF1B/ribsomal_bS6"/>
</dbReference>
<dbReference type="NCBIfam" id="TIGR00166">
    <property type="entry name" value="S6"/>
    <property type="match status" value="1"/>
</dbReference>
<dbReference type="PANTHER" id="PTHR21011">
    <property type="entry name" value="MITOCHONDRIAL 28S RIBOSOMAL PROTEIN S6"/>
    <property type="match status" value="1"/>
</dbReference>
<dbReference type="PANTHER" id="PTHR21011:SF1">
    <property type="entry name" value="SMALL RIBOSOMAL SUBUNIT PROTEIN BS6M"/>
    <property type="match status" value="1"/>
</dbReference>
<dbReference type="Pfam" id="PF01250">
    <property type="entry name" value="Ribosomal_S6"/>
    <property type="match status" value="1"/>
</dbReference>
<dbReference type="SUPFAM" id="SSF54995">
    <property type="entry name" value="Ribosomal protein S6"/>
    <property type="match status" value="1"/>
</dbReference>
<dbReference type="PROSITE" id="PS01048">
    <property type="entry name" value="RIBOSOMAL_S6"/>
    <property type="match status" value="1"/>
</dbReference>
<sequence length="96" mass="10935">MRPYEIMVILDPTLDERTVAPSLETFLNVVRKDGGKVEKVDIWGKRRLAYEIAKHAEGIYVVIDVKAAPATVSELDRQLSLNESVLRTKVMRTDKH</sequence>
<comment type="function">
    <text evidence="1">Binds together with bS18 to 16S ribosomal RNA.</text>
</comment>
<comment type="similarity">
    <text evidence="1">Belongs to the bacterial ribosomal protein bS6 family.</text>
</comment>